<proteinExistence type="evidence at transcript level"/>
<protein>
    <recommendedName>
        <fullName>Mitochondrial mRNA pseudouridine synthase Rpusd3</fullName>
        <ecNumber>5.4.99.-</ecNumber>
    </recommendedName>
    <alternativeName>
        <fullName>RNA pseudouridylate synthase domain-containing protein 3</fullName>
    </alternativeName>
</protein>
<organism>
    <name type="scientific">Mus musculus</name>
    <name type="common">Mouse</name>
    <dbReference type="NCBI Taxonomy" id="10090"/>
    <lineage>
        <taxon>Eukaryota</taxon>
        <taxon>Metazoa</taxon>
        <taxon>Chordata</taxon>
        <taxon>Craniata</taxon>
        <taxon>Vertebrata</taxon>
        <taxon>Euteleostomi</taxon>
        <taxon>Mammalia</taxon>
        <taxon>Eutheria</taxon>
        <taxon>Euarchontoglires</taxon>
        <taxon>Glires</taxon>
        <taxon>Rodentia</taxon>
        <taxon>Myomorpha</taxon>
        <taxon>Muroidea</taxon>
        <taxon>Muridae</taxon>
        <taxon>Murinae</taxon>
        <taxon>Mus</taxon>
        <taxon>Mus</taxon>
    </lineage>
</organism>
<dbReference type="EC" id="5.4.99.-"/>
<dbReference type="EMBL" id="AK076749">
    <property type="protein sequence ID" value="BAC36463.1"/>
    <property type="molecule type" value="mRNA"/>
</dbReference>
<dbReference type="EMBL" id="AK133871">
    <property type="protein sequence ID" value="BAE21901.1"/>
    <property type="status" value="ALT_FRAME"/>
    <property type="molecule type" value="mRNA"/>
</dbReference>
<dbReference type="EMBL" id="BC038081">
    <property type="protein sequence ID" value="AAH38081.1"/>
    <property type="molecule type" value="mRNA"/>
</dbReference>
<dbReference type="EMBL" id="BC116825">
    <property type="protein sequence ID" value="AAI16826.1"/>
    <property type="molecule type" value="mRNA"/>
</dbReference>
<dbReference type="EMBL" id="BC116827">
    <property type="protein sequence ID" value="AAI16828.1"/>
    <property type="molecule type" value="mRNA"/>
</dbReference>
<dbReference type="CCDS" id="CCDS51872.1">
    <molecule id="Q14AI6-1"/>
</dbReference>
<dbReference type="RefSeq" id="NP_001028376.1">
    <molecule id="Q14AI6-1"/>
    <property type="nucleotide sequence ID" value="NM_001033204.1"/>
</dbReference>
<dbReference type="RefSeq" id="NP_001333440.1">
    <property type="nucleotide sequence ID" value="NM_001346511.1"/>
</dbReference>
<dbReference type="SMR" id="Q14AI6"/>
<dbReference type="BioGRID" id="221589">
    <property type="interactions" value="2"/>
</dbReference>
<dbReference type="FunCoup" id="Q14AI6">
    <property type="interactions" value="540"/>
</dbReference>
<dbReference type="STRING" id="10090.ENSMUSP00000108715"/>
<dbReference type="PhosphoSitePlus" id="Q14AI6"/>
<dbReference type="PaxDb" id="10090-ENSMUSP00000108715"/>
<dbReference type="ProteomicsDB" id="256848">
    <molecule id="Q14AI6-1"/>
</dbReference>
<dbReference type="ProteomicsDB" id="256849">
    <molecule id="Q14AI6-2"/>
</dbReference>
<dbReference type="Pumba" id="Q14AI6"/>
<dbReference type="Antibodypedia" id="25685">
    <property type="antibodies" value="52 antibodies from 15 providers"/>
</dbReference>
<dbReference type="Ensembl" id="ENSMUST00000113092.9">
    <molecule id="Q14AI6-1"/>
    <property type="protein sequence ID" value="ENSMUSP00000108715.3"/>
    <property type="gene ID" value="ENSMUSG00000051169.15"/>
</dbReference>
<dbReference type="Ensembl" id="ENSMUST00000129047.8">
    <molecule id="Q14AI6-2"/>
    <property type="protein sequence ID" value="ENSMUSP00000120380.2"/>
    <property type="gene ID" value="ENSMUSG00000051169.15"/>
</dbReference>
<dbReference type="GeneID" id="101122"/>
<dbReference type="KEGG" id="mmu:101122"/>
<dbReference type="UCSC" id="uc009dfy.2">
    <molecule id="Q14AI6-1"/>
    <property type="organism name" value="mouse"/>
</dbReference>
<dbReference type="UCSC" id="uc009dga.1">
    <molecule id="Q14AI6-2"/>
    <property type="organism name" value="mouse"/>
</dbReference>
<dbReference type="AGR" id="MGI:2141440"/>
<dbReference type="CTD" id="285367"/>
<dbReference type="MGI" id="MGI:2141440">
    <property type="gene designation" value="Rpusd3"/>
</dbReference>
<dbReference type="VEuPathDB" id="HostDB:ENSMUSG00000051169"/>
<dbReference type="eggNOG" id="KOG1919">
    <property type="taxonomic scope" value="Eukaryota"/>
</dbReference>
<dbReference type="GeneTree" id="ENSGT00940000161059"/>
<dbReference type="InParanoid" id="Q14AI6"/>
<dbReference type="OMA" id="PPAWYHL"/>
<dbReference type="OrthoDB" id="428658at2759"/>
<dbReference type="PhylomeDB" id="Q14AI6"/>
<dbReference type="TreeFam" id="TF337899"/>
<dbReference type="BioGRID-ORCS" id="101122">
    <property type="hits" value="3 hits in 77 CRISPR screens"/>
</dbReference>
<dbReference type="PRO" id="PR:Q14AI6"/>
<dbReference type="Proteomes" id="UP000000589">
    <property type="component" value="Chromosome 6"/>
</dbReference>
<dbReference type="RNAct" id="Q14AI6">
    <property type="molecule type" value="protein"/>
</dbReference>
<dbReference type="Bgee" id="ENSMUSG00000051169">
    <property type="expression patterns" value="Expressed in right kidney and 143 other cell types or tissues"/>
</dbReference>
<dbReference type="ExpressionAtlas" id="Q14AI6">
    <property type="expression patterns" value="baseline and differential"/>
</dbReference>
<dbReference type="GO" id="GO:0005759">
    <property type="term" value="C:mitochondrial matrix"/>
    <property type="evidence" value="ECO:0007669"/>
    <property type="project" value="UniProtKB-SubCell"/>
</dbReference>
<dbReference type="GO" id="GO:0035770">
    <property type="term" value="C:ribonucleoprotein granule"/>
    <property type="evidence" value="ECO:0007669"/>
    <property type="project" value="Ensembl"/>
</dbReference>
<dbReference type="GO" id="GO:0009982">
    <property type="term" value="F:pseudouridine synthase activity"/>
    <property type="evidence" value="ECO:0007669"/>
    <property type="project" value="InterPro"/>
</dbReference>
<dbReference type="GO" id="GO:0003723">
    <property type="term" value="F:RNA binding"/>
    <property type="evidence" value="ECO:0007669"/>
    <property type="project" value="InterPro"/>
</dbReference>
<dbReference type="GO" id="GO:0006397">
    <property type="term" value="P:mRNA processing"/>
    <property type="evidence" value="ECO:0007669"/>
    <property type="project" value="UniProtKB-KW"/>
</dbReference>
<dbReference type="GO" id="GO:1990481">
    <property type="term" value="P:mRNA pseudouridine synthesis"/>
    <property type="evidence" value="ECO:0007669"/>
    <property type="project" value="Ensembl"/>
</dbReference>
<dbReference type="GO" id="GO:0070131">
    <property type="term" value="P:positive regulation of mitochondrial translation"/>
    <property type="evidence" value="ECO:0000250"/>
    <property type="project" value="UniProtKB"/>
</dbReference>
<dbReference type="CDD" id="cd02869">
    <property type="entry name" value="PseudoU_synth_RluA_like"/>
    <property type="match status" value="1"/>
</dbReference>
<dbReference type="Gene3D" id="3.30.2350.10">
    <property type="entry name" value="Pseudouridine synthase"/>
    <property type="match status" value="1"/>
</dbReference>
<dbReference type="InterPro" id="IPR020103">
    <property type="entry name" value="PsdUridine_synth_cat_dom_sf"/>
</dbReference>
<dbReference type="InterPro" id="IPR006145">
    <property type="entry name" value="PsdUridine_synth_RsuA/RluA"/>
</dbReference>
<dbReference type="InterPro" id="IPR050188">
    <property type="entry name" value="RluA_PseudoU_synthase"/>
</dbReference>
<dbReference type="PANTHER" id="PTHR21600:SF49">
    <property type="entry name" value="MITOCHONDRIAL MRNA PSEUDOURIDINE SYNTHASE RPUSD3"/>
    <property type="match status" value="1"/>
</dbReference>
<dbReference type="PANTHER" id="PTHR21600">
    <property type="entry name" value="MITOCHONDRIAL RNA PSEUDOURIDINE SYNTHASE"/>
    <property type="match status" value="1"/>
</dbReference>
<dbReference type="Pfam" id="PF00849">
    <property type="entry name" value="PseudoU_synth_2"/>
    <property type="match status" value="1"/>
</dbReference>
<dbReference type="SUPFAM" id="SSF55120">
    <property type="entry name" value="Pseudouridine synthase"/>
    <property type="match status" value="1"/>
</dbReference>
<feature type="transit peptide" description="Mitochondrion" evidence="2">
    <location>
        <begin position="1"/>
        <end position="36"/>
    </location>
</feature>
<feature type="chain" id="PRO_0000300823" description="Mitochondrial mRNA pseudouridine synthase Rpusd3">
    <location>
        <begin position="37"/>
        <end position="344"/>
    </location>
</feature>
<feature type="region of interest" description="Disordered" evidence="3">
    <location>
        <begin position="25"/>
        <end position="53"/>
    </location>
</feature>
<feature type="splice variant" id="VSP_027871" description="In isoform 2." evidence="4">
    <original>LDEALLRHLRLSPSQVAQMPLHLHLHRLLLPGTGSRDPPSELLAPLPPYFSRTLQCLRLSQQ</original>
    <variation>GPLSHMPALCGFGGNCVSQISCTFRLGGSWLGV</variation>
    <location>
        <begin position="283"/>
        <end position="344"/>
    </location>
</feature>
<feature type="sequence conflict" description="In Ref. 2; AAH38081." evidence="5" ref="2">
    <original>W</original>
    <variation>T</variation>
    <location>
        <position position="14"/>
    </location>
</feature>
<accession>Q14AI6</accession>
<accession>Q3UZF6</accession>
<accession>Q8BVS3</accession>
<accession>Q8CHZ5</accession>
<reference key="1">
    <citation type="journal article" date="2005" name="Science">
        <title>The transcriptional landscape of the mammalian genome.</title>
        <authorList>
            <person name="Carninci P."/>
            <person name="Kasukawa T."/>
            <person name="Katayama S."/>
            <person name="Gough J."/>
            <person name="Frith M.C."/>
            <person name="Maeda N."/>
            <person name="Oyama R."/>
            <person name="Ravasi T."/>
            <person name="Lenhard B."/>
            <person name="Wells C."/>
            <person name="Kodzius R."/>
            <person name="Shimokawa K."/>
            <person name="Bajic V.B."/>
            <person name="Brenner S.E."/>
            <person name="Batalov S."/>
            <person name="Forrest A.R."/>
            <person name="Zavolan M."/>
            <person name="Davis M.J."/>
            <person name="Wilming L.G."/>
            <person name="Aidinis V."/>
            <person name="Allen J.E."/>
            <person name="Ambesi-Impiombato A."/>
            <person name="Apweiler R."/>
            <person name="Aturaliya R.N."/>
            <person name="Bailey T.L."/>
            <person name="Bansal M."/>
            <person name="Baxter L."/>
            <person name="Beisel K.W."/>
            <person name="Bersano T."/>
            <person name="Bono H."/>
            <person name="Chalk A.M."/>
            <person name="Chiu K.P."/>
            <person name="Choudhary V."/>
            <person name="Christoffels A."/>
            <person name="Clutterbuck D.R."/>
            <person name="Crowe M.L."/>
            <person name="Dalla E."/>
            <person name="Dalrymple B.P."/>
            <person name="de Bono B."/>
            <person name="Della Gatta G."/>
            <person name="di Bernardo D."/>
            <person name="Down T."/>
            <person name="Engstrom P."/>
            <person name="Fagiolini M."/>
            <person name="Faulkner G."/>
            <person name="Fletcher C.F."/>
            <person name="Fukushima T."/>
            <person name="Furuno M."/>
            <person name="Futaki S."/>
            <person name="Gariboldi M."/>
            <person name="Georgii-Hemming P."/>
            <person name="Gingeras T.R."/>
            <person name="Gojobori T."/>
            <person name="Green R.E."/>
            <person name="Gustincich S."/>
            <person name="Harbers M."/>
            <person name="Hayashi Y."/>
            <person name="Hensch T.K."/>
            <person name="Hirokawa N."/>
            <person name="Hill D."/>
            <person name="Huminiecki L."/>
            <person name="Iacono M."/>
            <person name="Ikeo K."/>
            <person name="Iwama A."/>
            <person name="Ishikawa T."/>
            <person name="Jakt M."/>
            <person name="Kanapin A."/>
            <person name="Katoh M."/>
            <person name="Kawasawa Y."/>
            <person name="Kelso J."/>
            <person name="Kitamura H."/>
            <person name="Kitano H."/>
            <person name="Kollias G."/>
            <person name="Krishnan S.P."/>
            <person name="Kruger A."/>
            <person name="Kummerfeld S.K."/>
            <person name="Kurochkin I.V."/>
            <person name="Lareau L.F."/>
            <person name="Lazarevic D."/>
            <person name="Lipovich L."/>
            <person name="Liu J."/>
            <person name="Liuni S."/>
            <person name="McWilliam S."/>
            <person name="Madan Babu M."/>
            <person name="Madera M."/>
            <person name="Marchionni L."/>
            <person name="Matsuda H."/>
            <person name="Matsuzawa S."/>
            <person name="Miki H."/>
            <person name="Mignone F."/>
            <person name="Miyake S."/>
            <person name="Morris K."/>
            <person name="Mottagui-Tabar S."/>
            <person name="Mulder N."/>
            <person name="Nakano N."/>
            <person name="Nakauchi H."/>
            <person name="Ng P."/>
            <person name="Nilsson R."/>
            <person name="Nishiguchi S."/>
            <person name="Nishikawa S."/>
            <person name="Nori F."/>
            <person name="Ohara O."/>
            <person name="Okazaki Y."/>
            <person name="Orlando V."/>
            <person name="Pang K.C."/>
            <person name="Pavan W.J."/>
            <person name="Pavesi G."/>
            <person name="Pesole G."/>
            <person name="Petrovsky N."/>
            <person name="Piazza S."/>
            <person name="Reed J."/>
            <person name="Reid J.F."/>
            <person name="Ring B.Z."/>
            <person name="Ringwald M."/>
            <person name="Rost B."/>
            <person name="Ruan Y."/>
            <person name="Salzberg S.L."/>
            <person name="Sandelin A."/>
            <person name="Schneider C."/>
            <person name="Schoenbach C."/>
            <person name="Sekiguchi K."/>
            <person name="Semple C.A."/>
            <person name="Seno S."/>
            <person name="Sessa L."/>
            <person name="Sheng Y."/>
            <person name="Shibata Y."/>
            <person name="Shimada H."/>
            <person name="Shimada K."/>
            <person name="Silva D."/>
            <person name="Sinclair B."/>
            <person name="Sperling S."/>
            <person name="Stupka E."/>
            <person name="Sugiura K."/>
            <person name="Sultana R."/>
            <person name="Takenaka Y."/>
            <person name="Taki K."/>
            <person name="Tammoja K."/>
            <person name="Tan S.L."/>
            <person name="Tang S."/>
            <person name="Taylor M.S."/>
            <person name="Tegner J."/>
            <person name="Teichmann S.A."/>
            <person name="Ueda H.R."/>
            <person name="van Nimwegen E."/>
            <person name="Verardo R."/>
            <person name="Wei C.L."/>
            <person name="Yagi K."/>
            <person name="Yamanishi H."/>
            <person name="Zabarovsky E."/>
            <person name="Zhu S."/>
            <person name="Zimmer A."/>
            <person name="Hide W."/>
            <person name="Bult C."/>
            <person name="Grimmond S.M."/>
            <person name="Teasdale R.D."/>
            <person name="Liu E.T."/>
            <person name="Brusic V."/>
            <person name="Quackenbush J."/>
            <person name="Wahlestedt C."/>
            <person name="Mattick J.S."/>
            <person name="Hume D.A."/>
            <person name="Kai C."/>
            <person name="Sasaki D."/>
            <person name="Tomaru Y."/>
            <person name="Fukuda S."/>
            <person name="Kanamori-Katayama M."/>
            <person name="Suzuki M."/>
            <person name="Aoki J."/>
            <person name="Arakawa T."/>
            <person name="Iida J."/>
            <person name="Imamura K."/>
            <person name="Itoh M."/>
            <person name="Kato T."/>
            <person name="Kawaji H."/>
            <person name="Kawagashira N."/>
            <person name="Kawashima T."/>
            <person name="Kojima M."/>
            <person name="Kondo S."/>
            <person name="Konno H."/>
            <person name="Nakano K."/>
            <person name="Ninomiya N."/>
            <person name="Nishio T."/>
            <person name="Okada M."/>
            <person name="Plessy C."/>
            <person name="Shibata K."/>
            <person name="Shiraki T."/>
            <person name="Suzuki S."/>
            <person name="Tagami M."/>
            <person name="Waki K."/>
            <person name="Watahiki A."/>
            <person name="Okamura-Oho Y."/>
            <person name="Suzuki H."/>
            <person name="Kawai J."/>
            <person name="Hayashizaki Y."/>
        </authorList>
    </citation>
    <scope>NUCLEOTIDE SEQUENCE [LARGE SCALE MRNA] (ISOFORMS 1 AND 2)</scope>
    <source>
        <strain>C57BL/6J</strain>
        <tissue>Testis</tissue>
    </source>
</reference>
<reference key="2">
    <citation type="journal article" date="2004" name="Genome Res.">
        <title>The status, quality, and expansion of the NIH full-length cDNA project: the Mammalian Gene Collection (MGC).</title>
        <authorList>
            <consortium name="The MGC Project Team"/>
        </authorList>
    </citation>
    <scope>NUCLEOTIDE SEQUENCE [LARGE SCALE MRNA] (ISOFORM 1)</scope>
    <source>
        <strain>FVB/N</strain>
        <tissue>Brain</tissue>
        <tissue>Kidney</tissue>
    </source>
</reference>
<gene>
    <name type="primary">Rpusd3</name>
</gene>
<comment type="function">
    <text evidence="1">Catalyzes uridine to pseudouridine isomerization (pseudouridylation) of specific mitochondrial mRNAs (mt-mRNAs), a post-transcriptional modification necessary for their translation. Acts at position 390 in COXI mt-mRNA and at position 697-699 in mitochondrial COXIII mt-mRNA. As a component of a functional protein-RNA module, consisting of RCC1L, NGRN, RPUSD3, RPUSD4, TRUB2, FASTKD2 and 16S mitochondrial ribosomal RNA (16S mt-rRNA), controls 16S mt-rRNA abundance and may play a role in mitochondrial ribosome biogenesis.</text>
</comment>
<comment type="catalytic activity">
    <reaction evidence="1">
        <text>a uridine in mRNA = a pseudouridine in mRNA</text>
        <dbReference type="Rhea" id="RHEA:56644"/>
        <dbReference type="Rhea" id="RHEA-COMP:14658"/>
        <dbReference type="Rhea" id="RHEA-COMP:14659"/>
        <dbReference type="ChEBI" id="CHEBI:65314"/>
        <dbReference type="ChEBI" id="CHEBI:65315"/>
    </reaction>
</comment>
<comment type="subunit">
    <text evidence="1">Forms a regulatory protein-RNA complex, consisting of RCC1L, NGRN, RPUSD3, RPUSD4, TRUB2, FASTKD2 and 16S mt-rRNA.</text>
</comment>
<comment type="subcellular location">
    <subcellularLocation>
        <location evidence="1">Mitochondrion matrix</location>
    </subcellularLocation>
    <text evidence="1">Localizes to mitochondrial RNA granules, platforms for post-transcriptional RNA modification and ribosome assembly.</text>
</comment>
<comment type="alternative products">
    <event type="alternative splicing"/>
    <isoform>
        <id>Q14AI6-1</id>
        <name>1</name>
        <sequence type="displayed"/>
    </isoform>
    <isoform>
        <id>Q14AI6-2</id>
        <name>2</name>
        <sequence type="described" ref="VSP_027871"/>
    </isoform>
</comment>
<comment type="similarity">
    <text evidence="5">Belongs to the pseudouridine synthase RluA family.</text>
</comment>
<comment type="sequence caution" evidence="5">
    <conflict type="frameshift">
        <sequence resource="EMBL-CDS" id="BAE21901"/>
    </conflict>
</comment>
<name>RUSD3_MOUSE</name>
<sequence>MGALRVLRYVSMIWRPELGSCARQRDAGFGTEARRPSQPHRSSKHKDLVEDQPFPGLLRTENLGLEELAHVLRAAVVDQKGPLVTLNKPQGLPVTGRPGELTLLSVLPQLSQALGLEHQELQVVRAPGKEASGLVLLSSCPQTASRLQKFFIHSRRAQRPTATYCAVTDGIPEPSEGTVCMPLKMEQMNDVDLAVPVMSPSRKDIQEGVKRTLSRFHVMATGRGCALVQLQPLTVFPNQLQVHMALQLCPILGDHTYAARVGTVLGQRFLWPAETTKPQRQVLDEALLRHLRLSPSQVAQMPLHLHLHRLLLPGTGSRDPPSELLAPLPPYFSRTLQCLRLSQQ</sequence>
<evidence type="ECO:0000250" key="1">
    <source>
        <dbReference type="UniProtKB" id="Q6P087"/>
    </source>
</evidence>
<evidence type="ECO:0000255" key="2"/>
<evidence type="ECO:0000256" key="3">
    <source>
        <dbReference type="SAM" id="MobiDB-lite"/>
    </source>
</evidence>
<evidence type="ECO:0000303" key="4">
    <source>
    </source>
</evidence>
<evidence type="ECO:0000305" key="5"/>
<keyword id="KW-0025">Alternative splicing</keyword>
<keyword id="KW-0413">Isomerase</keyword>
<keyword id="KW-0496">Mitochondrion</keyword>
<keyword id="KW-0507">mRNA processing</keyword>
<keyword id="KW-1185">Reference proteome</keyword>
<keyword id="KW-0809">Transit peptide</keyword>